<proteinExistence type="inferred from homology"/>
<protein>
    <recommendedName>
        <fullName evidence="1">Large ribosomal subunit protein uL2</fullName>
    </recommendedName>
    <alternativeName>
        <fullName evidence="3">50S ribosomal protein L2</fullName>
    </alternativeName>
</protein>
<organism>
    <name type="scientific">Yersinia pestis (strain Pestoides F)</name>
    <dbReference type="NCBI Taxonomy" id="386656"/>
    <lineage>
        <taxon>Bacteria</taxon>
        <taxon>Pseudomonadati</taxon>
        <taxon>Pseudomonadota</taxon>
        <taxon>Gammaproteobacteria</taxon>
        <taxon>Enterobacterales</taxon>
        <taxon>Yersiniaceae</taxon>
        <taxon>Yersinia</taxon>
    </lineage>
</organism>
<accession>A4TGZ5</accession>
<sequence length="274" mass="30073">MAIVKCKPTSPGRRHVVKVVNPELHKGKPYAPLLEKLSKSGGRNNNGRITTRHIGGGHKQHYRLVDFKRNKDGIPAVVERLEYDPNRSANIALVLYKDGERRYILAPKGLKAGDQIQSGVDAAIKAGNTLPMRNIPVGSTVHNVEMKPGKGGQLARSAGAYVQIVARDGSYVTLRLRSGEMRKVQADCRATLGEVGNAEHMLRVLGKAGASRWRGIRPTVRGTAMNPVDHPHGGGEGRNFGKHPVTPWGVQTKGKKTRSNKRTDKFIVRRRSKK</sequence>
<reference key="1">
    <citation type="submission" date="2007-02" db="EMBL/GenBank/DDBJ databases">
        <title>Complete sequence of chromosome of Yersinia pestis Pestoides F.</title>
        <authorList>
            <consortium name="US DOE Joint Genome Institute"/>
            <person name="Copeland A."/>
            <person name="Lucas S."/>
            <person name="Lapidus A."/>
            <person name="Barry K."/>
            <person name="Detter J.C."/>
            <person name="Glavina del Rio T."/>
            <person name="Hammon N."/>
            <person name="Israni S."/>
            <person name="Dalin E."/>
            <person name="Tice H."/>
            <person name="Pitluck S."/>
            <person name="Di Bartolo G."/>
            <person name="Chain P."/>
            <person name="Malfatti S."/>
            <person name="Shin M."/>
            <person name="Vergez L."/>
            <person name="Schmutz J."/>
            <person name="Larimer F."/>
            <person name="Land M."/>
            <person name="Hauser L."/>
            <person name="Worsham P."/>
            <person name="Chu M."/>
            <person name="Bearden S."/>
            <person name="Garcia E."/>
            <person name="Richardson P."/>
        </authorList>
    </citation>
    <scope>NUCLEOTIDE SEQUENCE [LARGE SCALE GENOMIC DNA]</scope>
    <source>
        <strain>Pestoides F</strain>
    </source>
</reference>
<gene>
    <name evidence="1" type="primary">rplB</name>
    <name type="ordered locus">YPDSF_0136</name>
</gene>
<keyword id="KW-0687">Ribonucleoprotein</keyword>
<keyword id="KW-0689">Ribosomal protein</keyword>
<keyword id="KW-0694">RNA-binding</keyword>
<keyword id="KW-0699">rRNA-binding</keyword>
<feature type="chain" id="PRO_0000310042" description="Large ribosomal subunit protein uL2">
    <location>
        <begin position="1"/>
        <end position="274"/>
    </location>
</feature>
<feature type="region of interest" description="Disordered" evidence="2">
    <location>
        <begin position="221"/>
        <end position="274"/>
    </location>
</feature>
<dbReference type="EMBL" id="CP000668">
    <property type="protein sequence ID" value="ABP38558.1"/>
    <property type="molecule type" value="Genomic_DNA"/>
</dbReference>
<dbReference type="RefSeq" id="WP_002213425.1">
    <property type="nucleotide sequence ID" value="NZ_CP009715.1"/>
</dbReference>
<dbReference type="SMR" id="A4TGZ5"/>
<dbReference type="GeneID" id="97454234"/>
<dbReference type="KEGG" id="ypp:YPDSF_0136"/>
<dbReference type="PATRIC" id="fig|386656.14.peg.431"/>
<dbReference type="GO" id="GO:0015934">
    <property type="term" value="C:large ribosomal subunit"/>
    <property type="evidence" value="ECO:0007669"/>
    <property type="project" value="InterPro"/>
</dbReference>
<dbReference type="GO" id="GO:0019843">
    <property type="term" value="F:rRNA binding"/>
    <property type="evidence" value="ECO:0007669"/>
    <property type="project" value="UniProtKB-UniRule"/>
</dbReference>
<dbReference type="GO" id="GO:0003735">
    <property type="term" value="F:structural constituent of ribosome"/>
    <property type="evidence" value="ECO:0007669"/>
    <property type="project" value="InterPro"/>
</dbReference>
<dbReference type="GO" id="GO:0016740">
    <property type="term" value="F:transferase activity"/>
    <property type="evidence" value="ECO:0007669"/>
    <property type="project" value="InterPro"/>
</dbReference>
<dbReference type="GO" id="GO:0002181">
    <property type="term" value="P:cytoplasmic translation"/>
    <property type="evidence" value="ECO:0007669"/>
    <property type="project" value="TreeGrafter"/>
</dbReference>
<dbReference type="FunFam" id="2.30.30.30:FF:000001">
    <property type="entry name" value="50S ribosomal protein L2"/>
    <property type="match status" value="1"/>
</dbReference>
<dbReference type="FunFam" id="2.40.50.140:FF:000003">
    <property type="entry name" value="50S ribosomal protein L2"/>
    <property type="match status" value="1"/>
</dbReference>
<dbReference type="FunFam" id="4.10.950.10:FF:000001">
    <property type="entry name" value="50S ribosomal protein L2"/>
    <property type="match status" value="1"/>
</dbReference>
<dbReference type="Gene3D" id="2.30.30.30">
    <property type="match status" value="1"/>
</dbReference>
<dbReference type="Gene3D" id="2.40.50.140">
    <property type="entry name" value="Nucleic acid-binding proteins"/>
    <property type="match status" value="1"/>
</dbReference>
<dbReference type="Gene3D" id="4.10.950.10">
    <property type="entry name" value="Ribosomal protein L2, domain 3"/>
    <property type="match status" value="1"/>
</dbReference>
<dbReference type="HAMAP" id="MF_01320_B">
    <property type="entry name" value="Ribosomal_uL2_B"/>
    <property type="match status" value="1"/>
</dbReference>
<dbReference type="InterPro" id="IPR012340">
    <property type="entry name" value="NA-bd_OB-fold"/>
</dbReference>
<dbReference type="InterPro" id="IPR014722">
    <property type="entry name" value="Rib_uL2_dom2"/>
</dbReference>
<dbReference type="InterPro" id="IPR002171">
    <property type="entry name" value="Ribosomal_uL2"/>
</dbReference>
<dbReference type="InterPro" id="IPR005880">
    <property type="entry name" value="Ribosomal_uL2_bac/org-type"/>
</dbReference>
<dbReference type="InterPro" id="IPR022669">
    <property type="entry name" value="Ribosomal_uL2_C"/>
</dbReference>
<dbReference type="InterPro" id="IPR022671">
    <property type="entry name" value="Ribosomal_uL2_CS"/>
</dbReference>
<dbReference type="InterPro" id="IPR014726">
    <property type="entry name" value="Ribosomal_uL2_dom3"/>
</dbReference>
<dbReference type="InterPro" id="IPR022666">
    <property type="entry name" value="Ribosomal_uL2_RNA-bd_dom"/>
</dbReference>
<dbReference type="InterPro" id="IPR008991">
    <property type="entry name" value="Translation_prot_SH3-like_sf"/>
</dbReference>
<dbReference type="NCBIfam" id="TIGR01171">
    <property type="entry name" value="rplB_bact"/>
    <property type="match status" value="1"/>
</dbReference>
<dbReference type="PANTHER" id="PTHR13691:SF5">
    <property type="entry name" value="LARGE RIBOSOMAL SUBUNIT PROTEIN UL2M"/>
    <property type="match status" value="1"/>
</dbReference>
<dbReference type="PANTHER" id="PTHR13691">
    <property type="entry name" value="RIBOSOMAL PROTEIN L2"/>
    <property type="match status" value="1"/>
</dbReference>
<dbReference type="Pfam" id="PF00181">
    <property type="entry name" value="Ribosomal_L2"/>
    <property type="match status" value="1"/>
</dbReference>
<dbReference type="Pfam" id="PF03947">
    <property type="entry name" value="Ribosomal_L2_C"/>
    <property type="match status" value="1"/>
</dbReference>
<dbReference type="PIRSF" id="PIRSF002158">
    <property type="entry name" value="Ribosomal_L2"/>
    <property type="match status" value="1"/>
</dbReference>
<dbReference type="SMART" id="SM01383">
    <property type="entry name" value="Ribosomal_L2"/>
    <property type="match status" value="1"/>
</dbReference>
<dbReference type="SMART" id="SM01382">
    <property type="entry name" value="Ribosomal_L2_C"/>
    <property type="match status" value="1"/>
</dbReference>
<dbReference type="SUPFAM" id="SSF50249">
    <property type="entry name" value="Nucleic acid-binding proteins"/>
    <property type="match status" value="1"/>
</dbReference>
<dbReference type="SUPFAM" id="SSF50104">
    <property type="entry name" value="Translation proteins SH3-like domain"/>
    <property type="match status" value="1"/>
</dbReference>
<dbReference type="PROSITE" id="PS00467">
    <property type="entry name" value="RIBOSOMAL_L2"/>
    <property type="match status" value="1"/>
</dbReference>
<name>RL2_YERPP</name>
<comment type="function">
    <text evidence="1">One of the primary rRNA binding proteins. Required for association of the 30S and 50S subunits to form the 70S ribosome, for tRNA binding and peptide bond formation. It has been suggested to have peptidyltransferase activity; this is somewhat controversial. Makes several contacts with the 16S rRNA in the 70S ribosome.</text>
</comment>
<comment type="subunit">
    <text evidence="1">Part of the 50S ribosomal subunit. Forms a bridge to the 30S subunit in the 70S ribosome.</text>
</comment>
<comment type="similarity">
    <text evidence="1">Belongs to the universal ribosomal protein uL2 family.</text>
</comment>
<evidence type="ECO:0000255" key="1">
    <source>
        <dbReference type="HAMAP-Rule" id="MF_01320"/>
    </source>
</evidence>
<evidence type="ECO:0000256" key="2">
    <source>
        <dbReference type="SAM" id="MobiDB-lite"/>
    </source>
</evidence>
<evidence type="ECO:0000305" key="3"/>